<reference key="1">
    <citation type="journal article" date="2009" name="BMC Genomics">
        <title>Pseudogene accumulation in the evolutionary histories of Salmonella enterica serovars Paratyphi A and Typhi.</title>
        <authorList>
            <person name="Holt K.E."/>
            <person name="Thomson N.R."/>
            <person name="Wain J."/>
            <person name="Langridge G.C."/>
            <person name="Hasan R."/>
            <person name="Bhutta Z.A."/>
            <person name="Quail M.A."/>
            <person name="Norbertczak H."/>
            <person name="Walker D."/>
            <person name="Simmonds M."/>
            <person name="White B."/>
            <person name="Bason N."/>
            <person name="Mungall K."/>
            <person name="Dougan G."/>
            <person name="Parkhill J."/>
        </authorList>
    </citation>
    <scope>NUCLEOTIDE SEQUENCE [LARGE SCALE GENOMIC DNA]</scope>
    <source>
        <strain>AKU_12601</strain>
    </source>
</reference>
<sequence length="310" mass="34545">MKTLTRKLSRTAITLVLVILAFIAIFRAWVYYTESPWTRDARFSADVVAIAPDVAGLITHVNVHDNQLVKKDQVLFTIDQPRYQKALAEAEADVAYYQVLAQEKRQEAGRRNRLGVQAMSREEIDQANNVLQTVLHQLAKAQATRDLAKLDLERTVIRAPADGWVTNLNVYAGEFITRGSTAVALVKKNSFYVQAYMEETKLEGVRPGYRAEITPLGSNRVLKGTVDSVAAGVTNASSTSDAKGMATIDSNLEWVRLAQRVPVRIRLDEQQGNLWPAGTTATVVITGKQDRDASQDSFFRKLAHRLREFG</sequence>
<accession>B5BGR9</accession>
<comment type="function">
    <text evidence="1">Forms an efflux pump with AaeB.</text>
</comment>
<comment type="subcellular location">
    <subcellularLocation>
        <location evidence="1">Cell inner membrane</location>
        <topology evidence="1">Single-pass membrane protein</topology>
    </subcellularLocation>
</comment>
<comment type="similarity">
    <text evidence="1">Belongs to the membrane fusion protein (MFP) (TC 8.A.1) family.</text>
</comment>
<name>AAEA_SALPK</name>
<protein>
    <recommendedName>
        <fullName evidence="1">p-hydroxybenzoic acid efflux pump subunit AaeA</fullName>
        <shortName evidence="1">pHBA efflux pump protein A</shortName>
    </recommendedName>
</protein>
<organism>
    <name type="scientific">Salmonella paratyphi A (strain AKU_12601)</name>
    <dbReference type="NCBI Taxonomy" id="554290"/>
    <lineage>
        <taxon>Bacteria</taxon>
        <taxon>Pseudomonadati</taxon>
        <taxon>Pseudomonadota</taxon>
        <taxon>Gammaproteobacteria</taxon>
        <taxon>Enterobacterales</taxon>
        <taxon>Enterobacteriaceae</taxon>
        <taxon>Salmonella</taxon>
    </lineage>
</organism>
<gene>
    <name evidence="1" type="primary">aaeA</name>
    <name type="ordered locus">SSPA3018</name>
</gene>
<feature type="chain" id="PRO_1000146728" description="p-hydroxybenzoic acid efflux pump subunit AaeA">
    <location>
        <begin position="1"/>
        <end position="310"/>
    </location>
</feature>
<feature type="transmembrane region" description="Helical" evidence="1">
    <location>
        <begin position="12"/>
        <end position="32"/>
    </location>
</feature>
<evidence type="ECO:0000255" key="1">
    <source>
        <dbReference type="HAMAP-Rule" id="MF_01544"/>
    </source>
</evidence>
<keyword id="KW-0997">Cell inner membrane</keyword>
<keyword id="KW-1003">Cell membrane</keyword>
<keyword id="KW-0472">Membrane</keyword>
<keyword id="KW-0812">Transmembrane</keyword>
<keyword id="KW-1133">Transmembrane helix</keyword>
<keyword id="KW-0813">Transport</keyword>
<dbReference type="EMBL" id="FM200053">
    <property type="protein sequence ID" value="CAR61268.1"/>
    <property type="molecule type" value="Genomic_DNA"/>
</dbReference>
<dbReference type="RefSeq" id="WP_000855134.1">
    <property type="nucleotide sequence ID" value="NC_011147.1"/>
</dbReference>
<dbReference type="SMR" id="B5BGR9"/>
<dbReference type="KEGG" id="sek:SSPA3018"/>
<dbReference type="HOGENOM" id="CLU_018816_15_2_6"/>
<dbReference type="Proteomes" id="UP000001869">
    <property type="component" value="Chromosome"/>
</dbReference>
<dbReference type="GO" id="GO:0005886">
    <property type="term" value="C:plasma membrane"/>
    <property type="evidence" value="ECO:0007669"/>
    <property type="project" value="UniProtKB-SubCell"/>
</dbReference>
<dbReference type="GO" id="GO:0022857">
    <property type="term" value="F:transmembrane transporter activity"/>
    <property type="evidence" value="ECO:0007669"/>
    <property type="project" value="UniProtKB-UniRule"/>
</dbReference>
<dbReference type="FunFam" id="2.40.30.170:FF:000002">
    <property type="entry name" value="p-hydroxybenzoic acid efflux pump subunit AaeA"/>
    <property type="match status" value="1"/>
</dbReference>
<dbReference type="FunFam" id="2.40.50.100:FF:000018">
    <property type="entry name" value="p-hydroxybenzoic acid efflux pump subunit AaeA"/>
    <property type="match status" value="1"/>
</dbReference>
<dbReference type="Gene3D" id="2.40.30.170">
    <property type="match status" value="1"/>
</dbReference>
<dbReference type="Gene3D" id="2.40.50.100">
    <property type="match status" value="1"/>
</dbReference>
<dbReference type="HAMAP" id="MF_01544">
    <property type="entry name" value="AaeA"/>
    <property type="match status" value="1"/>
</dbReference>
<dbReference type="InterPro" id="IPR043602">
    <property type="entry name" value="CusB-like_dom_1"/>
</dbReference>
<dbReference type="InterPro" id="IPR032317">
    <property type="entry name" value="CusB_D23"/>
</dbReference>
<dbReference type="InterPro" id="IPR050393">
    <property type="entry name" value="MFP_Efflux_Pump"/>
</dbReference>
<dbReference type="InterPro" id="IPR022871">
    <property type="entry name" value="PHBA_efflux_pump_AaeA"/>
</dbReference>
<dbReference type="InterPro" id="IPR006143">
    <property type="entry name" value="RND_pump_MFP"/>
</dbReference>
<dbReference type="NCBIfam" id="NF007850">
    <property type="entry name" value="PRK10559.1"/>
    <property type="match status" value="1"/>
</dbReference>
<dbReference type="NCBIfam" id="TIGR01730">
    <property type="entry name" value="RND_mfp"/>
    <property type="match status" value="1"/>
</dbReference>
<dbReference type="PANTHER" id="PTHR30367:SF12">
    <property type="entry name" value="P-HYDROXYBENZOIC ACID EFFLUX PUMP SUBUNIT AAEA"/>
    <property type="match status" value="1"/>
</dbReference>
<dbReference type="PANTHER" id="PTHR30367">
    <property type="entry name" value="P-HYDROXYBENZOIC ACID EFFLUX PUMP SUBUNIT AAEA-RELATED"/>
    <property type="match status" value="1"/>
</dbReference>
<dbReference type="Pfam" id="PF00529">
    <property type="entry name" value="CusB_dom_1"/>
    <property type="match status" value="1"/>
</dbReference>
<dbReference type="Pfam" id="PF16576">
    <property type="entry name" value="HlyD_D23"/>
    <property type="match status" value="1"/>
</dbReference>
<dbReference type="SUPFAM" id="SSF111369">
    <property type="entry name" value="HlyD-like secretion proteins"/>
    <property type="match status" value="1"/>
</dbReference>
<proteinExistence type="inferred from homology"/>